<evidence type="ECO:0000255" key="1">
    <source>
        <dbReference type="HAMAP-Rule" id="MF_01363"/>
    </source>
</evidence>
<evidence type="ECO:0000256" key="2">
    <source>
        <dbReference type="SAM" id="MobiDB-lite"/>
    </source>
</evidence>
<evidence type="ECO:0000305" key="3"/>
<organism>
    <name type="scientific">Nitrobacter hamburgensis (strain DSM 10229 / NCIMB 13809 / X14)</name>
    <dbReference type="NCBI Taxonomy" id="323097"/>
    <lineage>
        <taxon>Bacteria</taxon>
        <taxon>Pseudomonadati</taxon>
        <taxon>Pseudomonadota</taxon>
        <taxon>Alphaproteobacteria</taxon>
        <taxon>Hyphomicrobiales</taxon>
        <taxon>Nitrobacteraceae</taxon>
        <taxon>Nitrobacter</taxon>
    </lineage>
</organism>
<feature type="chain" id="PRO_0000270698" description="Large ribosomal subunit protein bL21">
    <location>
        <begin position="1"/>
        <end position="128"/>
    </location>
</feature>
<feature type="region of interest" description="Disordered" evidence="2">
    <location>
        <begin position="104"/>
        <end position="128"/>
    </location>
</feature>
<feature type="compositionally biased region" description="Basic and acidic residues" evidence="2">
    <location>
        <begin position="116"/>
        <end position="128"/>
    </location>
</feature>
<accession>Q1QQU3</accession>
<sequence length="128" mass="13839">MFAVIKTGGRQYRVVPDDVLEIGKIAGDVGTIVQLGEVLVLGGDTPVLGLPTVAGASVAAEVLQHKRGPKVIAFKKRRRKHSKRKRGYRDEITVLRITEILADGKTPTVGPRPKKEKVVEPAEGEGDH</sequence>
<dbReference type="EMBL" id="CP000319">
    <property type="protein sequence ID" value="ABE61404.1"/>
    <property type="molecule type" value="Genomic_DNA"/>
</dbReference>
<dbReference type="RefSeq" id="WP_011509108.1">
    <property type="nucleotide sequence ID" value="NC_007964.1"/>
</dbReference>
<dbReference type="SMR" id="Q1QQU3"/>
<dbReference type="STRING" id="323097.Nham_0514"/>
<dbReference type="KEGG" id="nha:Nham_0514"/>
<dbReference type="eggNOG" id="COG0261">
    <property type="taxonomic scope" value="Bacteria"/>
</dbReference>
<dbReference type="HOGENOM" id="CLU_061463_1_2_5"/>
<dbReference type="OrthoDB" id="9813334at2"/>
<dbReference type="Proteomes" id="UP000001953">
    <property type="component" value="Chromosome"/>
</dbReference>
<dbReference type="GO" id="GO:0005737">
    <property type="term" value="C:cytoplasm"/>
    <property type="evidence" value="ECO:0007669"/>
    <property type="project" value="UniProtKB-ARBA"/>
</dbReference>
<dbReference type="GO" id="GO:1990904">
    <property type="term" value="C:ribonucleoprotein complex"/>
    <property type="evidence" value="ECO:0007669"/>
    <property type="project" value="UniProtKB-KW"/>
</dbReference>
<dbReference type="GO" id="GO:0005840">
    <property type="term" value="C:ribosome"/>
    <property type="evidence" value="ECO:0007669"/>
    <property type="project" value="UniProtKB-KW"/>
</dbReference>
<dbReference type="GO" id="GO:0019843">
    <property type="term" value="F:rRNA binding"/>
    <property type="evidence" value="ECO:0007669"/>
    <property type="project" value="UniProtKB-UniRule"/>
</dbReference>
<dbReference type="GO" id="GO:0003735">
    <property type="term" value="F:structural constituent of ribosome"/>
    <property type="evidence" value="ECO:0007669"/>
    <property type="project" value="InterPro"/>
</dbReference>
<dbReference type="GO" id="GO:0006412">
    <property type="term" value="P:translation"/>
    <property type="evidence" value="ECO:0007669"/>
    <property type="project" value="UniProtKB-UniRule"/>
</dbReference>
<dbReference type="HAMAP" id="MF_01363">
    <property type="entry name" value="Ribosomal_bL21"/>
    <property type="match status" value="1"/>
</dbReference>
<dbReference type="InterPro" id="IPR028909">
    <property type="entry name" value="bL21-like"/>
</dbReference>
<dbReference type="InterPro" id="IPR036164">
    <property type="entry name" value="bL21-like_sf"/>
</dbReference>
<dbReference type="InterPro" id="IPR001787">
    <property type="entry name" value="Ribosomal_bL21"/>
</dbReference>
<dbReference type="NCBIfam" id="TIGR00061">
    <property type="entry name" value="L21"/>
    <property type="match status" value="1"/>
</dbReference>
<dbReference type="PANTHER" id="PTHR21349">
    <property type="entry name" value="50S RIBOSOMAL PROTEIN L21"/>
    <property type="match status" value="1"/>
</dbReference>
<dbReference type="PANTHER" id="PTHR21349:SF0">
    <property type="entry name" value="LARGE RIBOSOMAL SUBUNIT PROTEIN BL21M"/>
    <property type="match status" value="1"/>
</dbReference>
<dbReference type="Pfam" id="PF00829">
    <property type="entry name" value="Ribosomal_L21p"/>
    <property type="match status" value="1"/>
</dbReference>
<dbReference type="SUPFAM" id="SSF141091">
    <property type="entry name" value="L21p-like"/>
    <property type="match status" value="1"/>
</dbReference>
<reference key="1">
    <citation type="submission" date="2006-03" db="EMBL/GenBank/DDBJ databases">
        <title>Complete sequence of chromosome of Nitrobacter hamburgensis X14.</title>
        <authorList>
            <consortium name="US DOE Joint Genome Institute"/>
            <person name="Copeland A."/>
            <person name="Lucas S."/>
            <person name="Lapidus A."/>
            <person name="Barry K."/>
            <person name="Detter J.C."/>
            <person name="Glavina del Rio T."/>
            <person name="Hammon N."/>
            <person name="Israni S."/>
            <person name="Dalin E."/>
            <person name="Tice H."/>
            <person name="Pitluck S."/>
            <person name="Chain P."/>
            <person name="Malfatti S."/>
            <person name="Shin M."/>
            <person name="Vergez L."/>
            <person name="Schmutz J."/>
            <person name="Larimer F."/>
            <person name="Land M."/>
            <person name="Hauser L."/>
            <person name="Kyrpides N."/>
            <person name="Ivanova N."/>
            <person name="Ward B."/>
            <person name="Arp D."/>
            <person name="Klotz M."/>
            <person name="Stein L."/>
            <person name="O'Mullan G."/>
            <person name="Starkenburg S."/>
            <person name="Sayavedra L."/>
            <person name="Poret-Peterson A.T."/>
            <person name="Gentry M.E."/>
            <person name="Bruce D."/>
            <person name="Richardson P."/>
        </authorList>
    </citation>
    <scope>NUCLEOTIDE SEQUENCE [LARGE SCALE GENOMIC DNA]</scope>
    <source>
        <strain>DSM 10229 / NCIMB 13809 / X14</strain>
    </source>
</reference>
<gene>
    <name evidence="1" type="primary">rplU</name>
    <name type="ordered locus">Nham_0514</name>
</gene>
<proteinExistence type="inferred from homology"/>
<comment type="function">
    <text evidence="1">This protein binds to 23S rRNA in the presence of protein L20.</text>
</comment>
<comment type="subunit">
    <text evidence="1">Part of the 50S ribosomal subunit. Contacts protein L20.</text>
</comment>
<comment type="similarity">
    <text evidence="1">Belongs to the bacterial ribosomal protein bL21 family.</text>
</comment>
<keyword id="KW-1185">Reference proteome</keyword>
<keyword id="KW-0687">Ribonucleoprotein</keyword>
<keyword id="KW-0689">Ribosomal protein</keyword>
<keyword id="KW-0694">RNA-binding</keyword>
<keyword id="KW-0699">rRNA-binding</keyword>
<protein>
    <recommendedName>
        <fullName evidence="1">Large ribosomal subunit protein bL21</fullName>
    </recommendedName>
    <alternativeName>
        <fullName evidence="3">50S ribosomal protein L21</fullName>
    </alternativeName>
</protein>
<name>RL21_NITHX</name>